<gene>
    <name type="ordered locus">Cagg_0203</name>
</gene>
<reference key="1">
    <citation type="submission" date="2008-12" db="EMBL/GenBank/DDBJ databases">
        <title>Complete sequence of Chloroflexus aggregans DSM 9485.</title>
        <authorList>
            <consortium name="US DOE Joint Genome Institute"/>
            <person name="Lucas S."/>
            <person name="Copeland A."/>
            <person name="Lapidus A."/>
            <person name="Glavina del Rio T."/>
            <person name="Dalin E."/>
            <person name="Tice H."/>
            <person name="Pitluck S."/>
            <person name="Foster B."/>
            <person name="Larimer F."/>
            <person name="Land M."/>
            <person name="Hauser L."/>
            <person name="Kyrpides N."/>
            <person name="Mikhailova N."/>
            <person name="Bryant D.A."/>
            <person name="Richardson P."/>
        </authorList>
    </citation>
    <scope>NUCLEOTIDE SEQUENCE [LARGE SCALE GENOMIC DNA]</scope>
    <source>
        <strain>MD-66 / DSM 9485</strain>
    </source>
</reference>
<proteinExistence type="inferred from homology"/>
<sequence>MSVYNPNDADFAFTIGIEEEYQIVDPETRELRSYITQILEPGRTILREQIKPEMHQSIVEVGTRPCRTISEARAEIVRLRGAIAGLAARHNLRIVAAGTHPFSSWMQQEITPDERYRMVVGEMQEAALQLLIFGMHCHIGMPNNEVAIELMNVARYICPHLLALSTSSPFWMGRNTGFKSYRSVIFSTFPRTGIPPTFHSASEFERYVQLLINTGCIDNGKKIWWDLRPHPFFGTLEFRVCDIATKVEECLALAATMQALIVKFYTMFEENTTFRVYRRALINENKWRAQRWGLDGKLIDFGKRKEVEAKALVHEIVELVDDVVDMLGSRKEVEYLLTIVDQGTSADRQLRVFAETNDLKAVVDSLMNETIEGVPVMTFDTESSVQTAHS</sequence>
<organism>
    <name type="scientific">Chloroflexus aggregans (strain MD-66 / DSM 9485)</name>
    <dbReference type="NCBI Taxonomy" id="326427"/>
    <lineage>
        <taxon>Bacteria</taxon>
        <taxon>Bacillati</taxon>
        <taxon>Chloroflexota</taxon>
        <taxon>Chloroflexia</taxon>
        <taxon>Chloroflexales</taxon>
        <taxon>Chloroflexineae</taxon>
        <taxon>Chloroflexaceae</taxon>
        <taxon>Chloroflexus</taxon>
    </lineage>
</organism>
<feature type="chain" id="PRO_1000185844" description="Putative glutamate--cysteine ligase 2">
    <location>
        <begin position="1"/>
        <end position="390"/>
    </location>
</feature>
<dbReference type="EC" id="6.3.2.2" evidence="1"/>
<dbReference type="EMBL" id="CP001337">
    <property type="protein sequence ID" value="ACL23151.1"/>
    <property type="molecule type" value="Genomic_DNA"/>
</dbReference>
<dbReference type="RefSeq" id="WP_012615517.1">
    <property type="nucleotide sequence ID" value="NC_011831.1"/>
</dbReference>
<dbReference type="SMR" id="B8GCV1"/>
<dbReference type="STRING" id="326427.Cagg_0203"/>
<dbReference type="KEGG" id="cag:Cagg_0203"/>
<dbReference type="eggNOG" id="COG2170">
    <property type="taxonomic scope" value="Bacteria"/>
</dbReference>
<dbReference type="HOGENOM" id="CLU_044848_1_0_0"/>
<dbReference type="OrthoDB" id="9769628at2"/>
<dbReference type="Proteomes" id="UP000002508">
    <property type="component" value="Chromosome"/>
</dbReference>
<dbReference type="GO" id="GO:0005524">
    <property type="term" value="F:ATP binding"/>
    <property type="evidence" value="ECO:0007669"/>
    <property type="project" value="UniProtKB-KW"/>
</dbReference>
<dbReference type="GO" id="GO:0004357">
    <property type="term" value="F:glutamate-cysteine ligase activity"/>
    <property type="evidence" value="ECO:0007669"/>
    <property type="project" value="UniProtKB-EC"/>
</dbReference>
<dbReference type="GO" id="GO:0042398">
    <property type="term" value="P:modified amino acid biosynthetic process"/>
    <property type="evidence" value="ECO:0007669"/>
    <property type="project" value="InterPro"/>
</dbReference>
<dbReference type="Gene3D" id="3.30.590.20">
    <property type="match status" value="1"/>
</dbReference>
<dbReference type="HAMAP" id="MF_01609">
    <property type="entry name" value="Glu_cys_ligase_2"/>
    <property type="match status" value="1"/>
</dbReference>
<dbReference type="InterPro" id="IPR050141">
    <property type="entry name" value="GCL_type2/YbdK_subfam"/>
</dbReference>
<dbReference type="InterPro" id="IPR006336">
    <property type="entry name" value="GCS2"/>
</dbReference>
<dbReference type="InterPro" id="IPR014746">
    <property type="entry name" value="Gln_synth/guanido_kin_cat_dom"/>
</dbReference>
<dbReference type="InterPro" id="IPR011793">
    <property type="entry name" value="YbdK"/>
</dbReference>
<dbReference type="NCBIfam" id="TIGR02050">
    <property type="entry name" value="gshA_cyan_rel"/>
    <property type="match status" value="1"/>
</dbReference>
<dbReference type="NCBIfam" id="NF010039">
    <property type="entry name" value="PRK13515.1"/>
    <property type="match status" value="1"/>
</dbReference>
<dbReference type="PANTHER" id="PTHR36510">
    <property type="entry name" value="GLUTAMATE--CYSTEINE LIGASE 2-RELATED"/>
    <property type="match status" value="1"/>
</dbReference>
<dbReference type="PANTHER" id="PTHR36510:SF1">
    <property type="entry name" value="GLUTAMATE--CYSTEINE LIGASE 2-RELATED"/>
    <property type="match status" value="1"/>
</dbReference>
<dbReference type="Pfam" id="PF04107">
    <property type="entry name" value="GCS2"/>
    <property type="match status" value="1"/>
</dbReference>
<dbReference type="SUPFAM" id="SSF55931">
    <property type="entry name" value="Glutamine synthetase/guanido kinase"/>
    <property type="match status" value="1"/>
</dbReference>
<evidence type="ECO:0000255" key="1">
    <source>
        <dbReference type="HAMAP-Rule" id="MF_01609"/>
    </source>
</evidence>
<comment type="function">
    <text evidence="1">ATP-dependent carboxylate-amine ligase which exhibits weak glutamate--cysteine ligase activity.</text>
</comment>
<comment type="catalytic activity">
    <reaction evidence="1">
        <text>L-cysteine + L-glutamate + ATP = gamma-L-glutamyl-L-cysteine + ADP + phosphate + H(+)</text>
        <dbReference type="Rhea" id="RHEA:13285"/>
        <dbReference type="ChEBI" id="CHEBI:15378"/>
        <dbReference type="ChEBI" id="CHEBI:29985"/>
        <dbReference type="ChEBI" id="CHEBI:30616"/>
        <dbReference type="ChEBI" id="CHEBI:35235"/>
        <dbReference type="ChEBI" id="CHEBI:43474"/>
        <dbReference type="ChEBI" id="CHEBI:58173"/>
        <dbReference type="ChEBI" id="CHEBI:456216"/>
        <dbReference type="EC" id="6.3.2.2"/>
    </reaction>
</comment>
<comment type="similarity">
    <text evidence="1">Belongs to the glutamate--cysteine ligase type 2 family. YbdK subfamily.</text>
</comment>
<name>GCS2_CHLAD</name>
<accession>B8GCV1</accession>
<keyword id="KW-0067">ATP-binding</keyword>
<keyword id="KW-0436">Ligase</keyword>
<keyword id="KW-0547">Nucleotide-binding</keyword>
<protein>
    <recommendedName>
        <fullName evidence="1">Putative glutamate--cysteine ligase 2</fullName>
        <ecNumber evidence="1">6.3.2.2</ecNumber>
    </recommendedName>
    <alternativeName>
        <fullName evidence="1">Gamma-glutamylcysteine synthetase 2</fullName>
        <shortName evidence="1">GCS 2</shortName>
        <shortName evidence="1">Gamma-GCS 2</shortName>
    </alternativeName>
</protein>